<proteinExistence type="inferred from homology"/>
<protein>
    <recommendedName>
        <fullName evidence="1">Cytochrome b6-f complex subunit 6</fullName>
    </recommendedName>
    <alternativeName>
        <fullName evidence="1">Cytochrome b6-f complex subunit PetL</fullName>
    </alternativeName>
    <alternativeName>
        <fullName evidence="1">Cytochrome b6-f complex subunit VI</fullName>
    </alternativeName>
</protein>
<evidence type="ECO:0000255" key="1">
    <source>
        <dbReference type="HAMAP-Rule" id="MF_00433"/>
    </source>
</evidence>
<dbReference type="EMBL" id="DQ422812">
    <property type="protein sequence ID" value="ABD62205.1"/>
    <property type="molecule type" value="Genomic_DNA"/>
</dbReference>
<dbReference type="RefSeq" id="YP_001019146.1">
    <property type="nucleotide sequence ID" value="NC_008822.1"/>
</dbReference>
<dbReference type="SMR" id="Q19V67"/>
<dbReference type="GeneID" id="4783225"/>
<dbReference type="GO" id="GO:0009535">
    <property type="term" value="C:chloroplast thylakoid membrane"/>
    <property type="evidence" value="ECO:0007669"/>
    <property type="project" value="UniProtKB-SubCell"/>
</dbReference>
<dbReference type="GO" id="GO:0009512">
    <property type="term" value="C:cytochrome b6f complex"/>
    <property type="evidence" value="ECO:0007669"/>
    <property type="project" value="InterPro"/>
</dbReference>
<dbReference type="GO" id="GO:0045158">
    <property type="term" value="F:electron transporter, transferring electrons within cytochrome b6/f complex of photosystem II activity"/>
    <property type="evidence" value="ECO:0007669"/>
    <property type="project" value="UniProtKB-UniRule"/>
</dbReference>
<dbReference type="GO" id="GO:0015979">
    <property type="term" value="P:photosynthesis"/>
    <property type="evidence" value="ECO:0007669"/>
    <property type="project" value="UniProtKB-KW"/>
</dbReference>
<dbReference type="HAMAP" id="MF_00433">
    <property type="entry name" value="Cytb6_f_PetL"/>
    <property type="match status" value="1"/>
</dbReference>
<dbReference type="InterPro" id="IPR007802">
    <property type="entry name" value="Cyt_b6/f_cplx_su6"/>
</dbReference>
<geneLocation type="chloroplast"/>
<gene>
    <name evidence="1" type="primary">petL</name>
</gene>
<organism>
    <name type="scientific">Chlorokybus atmophyticus</name>
    <name type="common">Soil alga</name>
    <dbReference type="NCBI Taxonomy" id="3144"/>
    <lineage>
        <taxon>Eukaryota</taxon>
        <taxon>Viridiplantae</taxon>
        <taxon>Streptophyta</taxon>
        <taxon>Chlorokybophyceae</taxon>
        <taxon>Chlorokybales</taxon>
        <taxon>Chlorokybaceae</taxon>
        <taxon>Chlorokybus</taxon>
    </lineage>
</organism>
<feature type="chain" id="PRO_0000300139" description="Cytochrome b6-f complex subunit 6">
    <location>
        <begin position="1"/>
        <end position="31"/>
    </location>
</feature>
<feature type="transmembrane region" description="Helical" evidence="1">
    <location>
        <begin position="5"/>
        <end position="25"/>
    </location>
</feature>
<reference key="1">
    <citation type="journal article" date="2007" name="BMC Biol.">
        <title>A clade uniting the green algae Mesostigma viride and Chlorokybus atmophyticus represents the deepest branch of the Streptophyta in chloroplast genome-based phylogenies.</title>
        <authorList>
            <person name="Lemieux C."/>
            <person name="Otis C."/>
            <person name="Turmel M."/>
        </authorList>
    </citation>
    <scope>NUCLEOTIDE SEQUENCE [LARGE SCALE GENOMIC DNA]</scope>
    <source>
        <strain>SAG 48.80</strain>
    </source>
</reference>
<accession>Q19V67</accession>
<keyword id="KW-0150">Chloroplast</keyword>
<keyword id="KW-0249">Electron transport</keyword>
<keyword id="KW-0472">Membrane</keyword>
<keyword id="KW-0602">Photosynthesis</keyword>
<keyword id="KW-0934">Plastid</keyword>
<keyword id="KW-0793">Thylakoid</keyword>
<keyword id="KW-0812">Transmembrane</keyword>
<keyword id="KW-1133">Transmembrane helix</keyword>
<keyword id="KW-0813">Transport</keyword>
<sequence length="31" mass="3443">MFTAISYLGILVGALLFVTITFLTLRTIQLL</sequence>
<comment type="function">
    <text evidence="1">Component of the cytochrome b6-f complex, which mediates electron transfer between photosystem II (PSII) and photosystem I (PSI), cyclic electron flow around PSI, and state transitions. PetL is important for photoautotrophic growth as well as for electron transfer efficiency and stability of the cytochrome b6-f complex.</text>
</comment>
<comment type="subunit">
    <text evidence="1">The 4 large subunits of the cytochrome b6-f complex are cytochrome b6, subunit IV (17 kDa polypeptide, PetD), cytochrome f and the Rieske protein, while the 4 small subunits are PetG, PetL, PetM and PetN. The complex functions as a dimer.</text>
</comment>
<comment type="subcellular location">
    <subcellularLocation>
        <location evidence="1">Plastid</location>
        <location evidence="1">Chloroplast thylakoid membrane</location>
        <topology evidence="1">Single-pass membrane protein</topology>
    </subcellularLocation>
</comment>
<comment type="similarity">
    <text evidence="1">Belongs to the PetL family.</text>
</comment>
<name>PETL_CHLAT</name>